<proteinExistence type="evidence at protein level"/>
<dbReference type="EMBL" id="FJ977045">
    <property type="protein sequence ID" value="ADC34694.2"/>
    <property type="status" value="ALT_INIT"/>
    <property type="molecule type" value="mRNA"/>
</dbReference>
<dbReference type="EMBL" id="BK007093">
    <property type="protein sequence ID" value="DAA34787.1"/>
    <property type="status" value="ALT_INIT"/>
    <property type="molecule type" value="Genomic_DNA"/>
</dbReference>
<dbReference type="CCDS" id="CCDS50781.1">
    <molecule id="E1U8D0-1"/>
</dbReference>
<dbReference type="RefSeq" id="NP_001158135.1">
    <molecule id="E1U8D0-1"/>
    <property type="nucleotide sequence ID" value="NM_001164663.1"/>
</dbReference>
<dbReference type="SMR" id="E1U8D0"/>
<dbReference type="FunCoup" id="E1U8D0">
    <property type="interactions" value="465"/>
</dbReference>
<dbReference type="IntAct" id="E1U8D0">
    <property type="interactions" value="22"/>
</dbReference>
<dbReference type="STRING" id="10090.ENSMUSP00000066556"/>
<dbReference type="GlyGen" id="E1U8D0">
    <property type="glycosylation" value="1 site"/>
</dbReference>
<dbReference type="iPTMnet" id="E1U8D0"/>
<dbReference type="jPOST" id="E1U8D0"/>
<dbReference type="PaxDb" id="10090-ENSMUSP00000066556"/>
<dbReference type="PeptideAtlas" id="E1U8D0"/>
<dbReference type="ProteomicsDB" id="261548"/>
<dbReference type="ProteomicsDB" id="359010"/>
<dbReference type="Pumba" id="E1U8D0"/>
<dbReference type="Antibodypedia" id="55174">
    <property type="antibodies" value="124 antibodies from 24 providers"/>
</dbReference>
<dbReference type="Ensembl" id="ENSMUST00000069098.7">
    <molecule id="E1U8D0-1"/>
    <property type="protein sequence ID" value="ENSMUSP00000066556.7"/>
    <property type="gene ID" value="ENSMUSG00000055485.7"/>
</dbReference>
<dbReference type="GeneID" id="320706"/>
<dbReference type="KEGG" id="mmu:320706"/>
<dbReference type="AGR" id="MGI:2444575"/>
<dbReference type="CTD" id="140710"/>
<dbReference type="MGI" id="MGI:2444575">
    <property type="gene designation" value="Mtcl2"/>
</dbReference>
<dbReference type="VEuPathDB" id="HostDB:ENSMUSG00000055485"/>
<dbReference type="eggNOG" id="KOG4787">
    <property type="taxonomic scope" value="Eukaryota"/>
</dbReference>
<dbReference type="GeneTree" id="ENSGT00950000182982"/>
<dbReference type="HOGENOM" id="CLU_002595_0_0_1"/>
<dbReference type="InParanoid" id="E1U8D0"/>
<dbReference type="OMA" id="DDMKDHS"/>
<dbReference type="OrthoDB" id="10036174at2759"/>
<dbReference type="TreeFam" id="TF331853"/>
<dbReference type="BioGRID-ORCS" id="320706">
    <property type="hits" value="3 hits in 77 CRISPR screens"/>
</dbReference>
<dbReference type="ChiTaRS" id="Soga1">
    <property type="organism name" value="mouse"/>
</dbReference>
<dbReference type="PRO" id="PR:E1U8D0"/>
<dbReference type="Proteomes" id="UP000000589">
    <property type="component" value="Chromosome 2"/>
</dbReference>
<dbReference type="RNAct" id="E1U8D0">
    <property type="molecule type" value="protein"/>
</dbReference>
<dbReference type="Bgee" id="ENSMUSG00000055485">
    <property type="expression patterns" value="Expressed in embryonic brain and 122 other cell types or tissues"/>
</dbReference>
<dbReference type="GO" id="GO:0005615">
    <property type="term" value="C:extracellular space"/>
    <property type="evidence" value="ECO:0000314"/>
    <property type="project" value="UniProtKB"/>
</dbReference>
<dbReference type="GO" id="GO:0000139">
    <property type="term" value="C:Golgi membrane"/>
    <property type="evidence" value="ECO:0007669"/>
    <property type="project" value="UniProtKB-SubCell"/>
</dbReference>
<dbReference type="GO" id="GO:0005874">
    <property type="term" value="C:microtubule"/>
    <property type="evidence" value="ECO:0000314"/>
    <property type="project" value="UniProtKB"/>
</dbReference>
<dbReference type="GO" id="GO:0030496">
    <property type="term" value="C:midbody"/>
    <property type="evidence" value="ECO:0000250"/>
    <property type="project" value="UniProtKB"/>
</dbReference>
<dbReference type="GO" id="GO:0051301">
    <property type="term" value="P:cell division"/>
    <property type="evidence" value="ECO:0007669"/>
    <property type="project" value="UniProtKB-KW"/>
</dbReference>
<dbReference type="GO" id="GO:0007059">
    <property type="term" value="P:chromosome segregation"/>
    <property type="evidence" value="ECO:0000250"/>
    <property type="project" value="UniProtKB"/>
</dbReference>
<dbReference type="GO" id="GO:0008286">
    <property type="term" value="P:insulin receptor signaling pathway"/>
    <property type="evidence" value="ECO:0000314"/>
    <property type="project" value="UniProtKB"/>
</dbReference>
<dbReference type="GO" id="GO:0045721">
    <property type="term" value="P:negative regulation of gluconeogenesis"/>
    <property type="evidence" value="ECO:0000315"/>
    <property type="project" value="UniProtKB"/>
</dbReference>
<dbReference type="GO" id="GO:0010506">
    <property type="term" value="P:regulation of autophagy"/>
    <property type="evidence" value="ECO:0000314"/>
    <property type="project" value="UniProtKB"/>
</dbReference>
<dbReference type="InterPro" id="IPR049885">
    <property type="entry name" value="MTCL1-3"/>
</dbReference>
<dbReference type="InterPro" id="IPR027882">
    <property type="entry name" value="SOGA1/2-like_CC"/>
</dbReference>
<dbReference type="InterPro" id="IPR027881">
    <property type="entry name" value="SOGA_CC"/>
</dbReference>
<dbReference type="PANTHER" id="PTHR15742">
    <property type="entry name" value="GIRDIN"/>
    <property type="match status" value="1"/>
</dbReference>
<dbReference type="PANTHER" id="PTHR15742:SF1">
    <property type="entry name" value="PROTEIN SOGA1"/>
    <property type="match status" value="1"/>
</dbReference>
<dbReference type="Pfam" id="PF11365">
    <property type="entry name" value="SOGA"/>
    <property type="match status" value="2"/>
</dbReference>
<dbReference type="Pfam" id="PF14818">
    <property type="entry name" value="SOGA1-2-like_CC"/>
    <property type="match status" value="1"/>
</dbReference>
<accession>E1U8D0</accession>
<accession>A2ACV6</accession>
<keyword id="KW-0025">Alternative splicing</keyword>
<keyword id="KW-0131">Cell cycle</keyword>
<keyword id="KW-0132">Cell division</keyword>
<keyword id="KW-0175">Coiled coil</keyword>
<keyword id="KW-0963">Cytoplasm</keyword>
<keyword id="KW-0206">Cytoskeleton</keyword>
<keyword id="KW-0333">Golgi apparatus</keyword>
<keyword id="KW-0472">Membrane</keyword>
<keyword id="KW-0498">Mitosis</keyword>
<keyword id="KW-0597">Phosphoprotein</keyword>
<keyword id="KW-1185">Reference proteome</keyword>
<keyword id="KW-0964">Secreted</keyword>
<feature type="chain" id="PRO_0000418051" description="Microtubule cross-linking factor 2">
    <location>
        <begin position="1"/>
        <end position="1654"/>
    </location>
</feature>
<feature type="chain" id="PRO_0000418052" description="N-terminal form" evidence="4">
    <location>
        <begin position="1"/>
        <end position="922"/>
    </location>
</feature>
<feature type="chain" id="PRO_0000418053" description="C-terminal 80 kDa form" evidence="4">
    <location>
        <begin position="923"/>
        <end position="1654"/>
    </location>
</feature>
<feature type="region of interest" description="Disordered" evidence="3">
    <location>
        <begin position="1"/>
        <end position="188"/>
    </location>
</feature>
<feature type="region of interest" description="Required for association with Golgi apparatus membrane">
    <location>
        <begin position="209"/>
        <end position="238"/>
    </location>
</feature>
<feature type="region of interest" description="Disordered" evidence="3">
    <location>
        <begin position="348"/>
        <end position="379"/>
    </location>
</feature>
<feature type="region of interest" description="Disordered" evidence="3">
    <location>
        <begin position="1122"/>
        <end position="1146"/>
    </location>
</feature>
<feature type="region of interest" description="KR-rich domain required for microtubules binding">
    <location>
        <begin position="1406"/>
        <end position="1505"/>
    </location>
</feature>
<feature type="region of interest" description="Disordered" evidence="3">
    <location>
        <begin position="1427"/>
        <end position="1450"/>
    </location>
</feature>
<feature type="region of interest" description="Disordered" evidence="3">
    <location>
        <begin position="1537"/>
        <end position="1560"/>
    </location>
</feature>
<feature type="region of interest" description="Disordered" evidence="3">
    <location>
        <begin position="1627"/>
        <end position="1654"/>
    </location>
</feature>
<feature type="coiled-coil region" evidence="2">
    <location>
        <begin position="216"/>
        <end position="279"/>
    </location>
</feature>
<feature type="coiled-coil region" evidence="2">
    <location>
        <begin position="308"/>
        <end position="349"/>
    </location>
</feature>
<feature type="coiled-coil region" evidence="2">
    <location>
        <begin position="448"/>
        <end position="546"/>
    </location>
</feature>
<feature type="coiled-coil region" evidence="2">
    <location>
        <begin position="816"/>
        <end position="843"/>
    </location>
</feature>
<feature type="coiled-coil region" evidence="2">
    <location>
        <begin position="1079"/>
        <end position="1113"/>
    </location>
</feature>
<feature type="compositionally biased region" description="Low complexity" evidence="3">
    <location>
        <begin position="55"/>
        <end position="66"/>
    </location>
</feature>
<feature type="compositionally biased region" description="Pro residues" evidence="3">
    <location>
        <begin position="102"/>
        <end position="113"/>
    </location>
</feature>
<feature type="compositionally biased region" description="Low complexity" evidence="3">
    <location>
        <begin position="132"/>
        <end position="147"/>
    </location>
</feature>
<feature type="compositionally biased region" description="Basic and acidic residues" evidence="3">
    <location>
        <begin position="1122"/>
        <end position="1145"/>
    </location>
</feature>
<feature type="compositionally biased region" description="Basic residues" evidence="3">
    <location>
        <begin position="1628"/>
        <end position="1638"/>
    </location>
</feature>
<feature type="site" description="Cleavage" evidence="7">
    <location>
        <begin position="922"/>
        <end position="923"/>
    </location>
</feature>
<feature type="modified residue" description="Phosphoserine" evidence="1">
    <location>
        <position position="1165"/>
    </location>
</feature>
<feature type="modified residue" description="Phosphoserine" evidence="1">
    <location>
        <position position="1251"/>
    </location>
</feature>
<feature type="splice variant" id="VSP_062227" description="In isoform 2.">
    <location>
        <begin position="1"/>
        <end position="236"/>
    </location>
</feature>
<feature type="mutagenesis site" description="Loss of association with Golgi apparatus membrane." evidence="6">
    <original>LVRELEELRSENDYLKDEIEEL</original>
    <variation>AVREAEELRSENDYAKDEIEEA</variation>
    <variation>PVREPEELRSENDYPKDEIEEP</variation>
    <location>
        <begin position="212"/>
        <end position="233"/>
    </location>
</feature>
<organism>
    <name type="scientific">Mus musculus</name>
    <name type="common">Mouse</name>
    <dbReference type="NCBI Taxonomy" id="10090"/>
    <lineage>
        <taxon>Eukaryota</taxon>
        <taxon>Metazoa</taxon>
        <taxon>Chordata</taxon>
        <taxon>Craniata</taxon>
        <taxon>Vertebrata</taxon>
        <taxon>Euteleostomi</taxon>
        <taxon>Mammalia</taxon>
        <taxon>Eutheria</taxon>
        <taxon>Euarchontoglires</taxon>
        <taxon>Glires</taxon>
        <taxon>Rodentia</taxon>
        <taxon>Myomorpha</taxon>
        <taxon>Muroidea</taxon>
        <taxon>Muridae</taxon>
        <taxon>Murinae</taxon>
        <taxon>Mus</taxon>
        <taxon>Mus</taxon>
    </lineage>
</organism>
<name>MTCL2_MOUSE</name>
<reference key="1">
    <citation type="journal article" date="2010" name="Am. J. Pathol.">
        <title>Adiponectin lowers glucose production by increasing SOGA.</title>
        <authorList>
            <person name="Cowerd R.B."/>
            <person name="Asmar M.M."/>
            <person name="Alderman J.M."/>
            <person name="Alderman E.A."/>
            <person name="Garland A.L."/>
            <person name="Busby W.H."/>
            <person name="Bodnar W.M."/>
            <person name="Rusyn I."/>
            <person name="Medoff B.D."/>
            <person name="Tisch R."/>
            <person name="Mayer-Davis E."/>
            <person name="Swenberg J.A."/>
            <person name="Zeisel S.H."/>
            <person name="Combs T.P."/>
        </authorList>
    </citation>
    <scope>NUCLEOTIDE SEQUENCE [GENOMIC DNA / MRNA]</scope>
    <scope>FUNCTION IN AUTOPHAGY INHIBITION</scope>
    <scope>PROTEOLYTIC PROCESSING</scope>
    <scope>CLEAVAGE SITE</scope>
    <scope>SUBUNIT</scope>
    <scope>INDUCTION</scope>
    <scope>TISSUE SPECIFICITY</scope>
    <scope>IDENTIFICATION BY MASS SPECTROMETRY</scope>
    <source>
        <strain>C57BL/6J</strain>
        <tissue>Liver</tissue>
    </source>
</reference>
<reference evidence="9 10" key="2">
    <citation type="journal article" date="2009" name="PLoS Biol.">
        <title>Lineage-specific biology revealed by a finished genome assembly of the mouse.</title>
        <authorList>
            <person name="Church D.M."/>
            <person name="Goodstadt L."/>
            <person name="Hillier L.W."/>
            <person name="Zody M.C."/>
            <person name="Goldstein S."/>
            <person name="She X."/>
            <person name="Bult C.J."/>
            <person name="Agarwala R."/>
            <person name="Cherry J.L."/>
            <person name="DiCuccio M."/>
            <person name="Hlavina W."/>
            <person name="Kapustin Y."/>
            <person name="Meric P."/>
            <person name="Maglott D."/>
            <person name="Birtle Z."/>
            <person name="Marques A.C."/>
            <person name="Graves T."/>
            <person name="Zhou S."/>
            <person name="Teague B."/>
            <person name="Potamousis K."/>
            <person name="Churas C."/>
            <person name="Place M."/>
            <person name="Herschleb J."/>
            <person name="Runnheim R."/>
            <person name="Forrest D."/>
            <person name="Amos-Landgraf J."/>
            <person name="Schwartz D.C."/>
            <person name="Cheng Z."/>
            <person name="Lindblad-Toh K."/>
            <person name="Eichler E.E."/>
            <person name="Ponting C.P."/>
        </authorList>
    </citation>
    <scope>NUCLEOTIDE SEQUENCE [LARGE SCALE GENOMIC DNA]</scope>
    <source>
        <strain evidence="9 10">C57BL/6J</strain>
    </source>
</reference>
<reference key="3">
    <citation type="journal article" date="2010" name="Cell">
        <title>A tissue-specific atlas of mouse protein phosphorylation and expression.</title>
        <authorList>
            <person name="Huttlin E.L."/>
            <person name="Jedrychowski M.P."/>
            <person name="Elias J.E."/>
            <person name="Goswami T."/>
            <person name="Rad R."/>
            <person name="Beausoleil S.A."/>
            <person name="Villen J."/>
            <person name="Haas W."/>
            <person name="Sowa M.E."/>
            <person name="Gygi S.P."/>
        </authorList>
    </citation>
    <scope>IDENTIFICATION BY MASS SPECTROMETRY [LARGE SCALE ANALYSIS]</scope>
    <source>
        <tissue>Brain</tissue>
        <tissue>Brown adipose tissue</tissue>
        <tissue>Lung</tissue>
        <tissue>Testis</tissue>
    </source>
</reference>
<reference key="4">
    <citation type="journal article" date="2017" name="Mol. Cell. Proteomics">
        <title>Characterization of the CLASP2 Protein Interaction Network Identifies SOGA1 as a Microtubule-Associated Protein.</title>
        <authorList>
            <person name="Kruse R."/>
            <person name="Krantz J."/>
            <person name="Barker N."/>
            <person name="Coletta R.L."/>
            <person name="Rafikov R."/>
            <person name="Luo M."/>
            <person name="Hoejlund K."/>
            <person name="Mandarino L.J."/>
            <person name="Langlais P.R."/>
        </authorList>
    </citation>
    <scope>INTERACTION WITH CLASP2</scope>
    <scope>SUBCELLULAR LOCATION</scope>
</reference>
<reference key="5">
    <citation type="journal article" date="2022" name="J. Cell Sci.">
        <title>MTCL2 promotes asymmetric microtubule organization by crosslinking microtubules on the Golgi membrane.</title>
        <authorList>
            <person name="Matsuoka R."/>
            <person name="Miki M."/>
            <person name="Mizuno S."/>
            <person name="Ito Y."/>
            <person name="Yamada C."/>
            <person name="Suzuki A."/>
        </authorList>
    </citation>
    <scope>FUNCTION</scope>
    <scope>SUBCELLULAR LOCATION</scope>
    <scope>DOMAIN</scope>
    <scope>MUTAGENESIS OF 212-LEU--LEU-233</scope>
</reference>
<protein>
    <recommendedName>
        <fullName>Microtubule cross-linking factor 2</fullName>
    </recommendedName>
    <alternativeName>
        <fullName>SOGA family member 1</fullName>
    </alternativeName>
    <alternativeName>
        <fullName>Suppressor of glucose by autophagy</fullName>
    </alternativeName>
    <alternativeName>
        <fullName>Suppressor of glucose, autophagy-associated protein 1</fullName>
    </alternativeName>
    <component>
        <recommendedName>
            <fullName>N-terminal form</fullName>
        </recommendedName>
    </component>
    <component>
        <recommendedName>
            <fullName>C-terminal 80 kDa form</fullName>
            <shortName>80-kDa SOGA fragment</shortName>
        </recommendedName>
    </component>
</protein>
<gene>
    <name type="primary">Mtcl2</name>
    <name type="synonym">Soga</name>
    <name type="synonym">Soga1</name>
</gene>
<sequence>METPAGESSARGYGPPPAPAPAAERKKSHRAPSPARPKDVAGWSLAKGRRGTGPGSATACGTASSARPDKKGRAVAPGTRGTGPRVAGVRTGVRAKGRPRPGTGPRPPPPPPSLTDSSSEVSDCASEEARQLGLELALSSDAESAAGGPAGTRTGQPPQPAQSGQQPPRPPASPDEPSVAASSVGSSRLPLSASLAFSDLTEEMLDCGPGGLVRELEELRSENDYLKDEIEELRAEMLEMRDVYMEEDVYQLQELRQQLDQASKTCRILQYRLRKAERRSLRAAQTGQVDGELIRGLEQDVKVSKDISMRLHKELEVVEKKRMRLEEENEGLRQRLIETELAKQVLQTELDRPREHSLKKRGTRSLGKTDKKPTAQEDSADLKCQLHFAKEESALMCKKLTKLAKENDSMKEELLKYRSLYGDLDAALSAEELADAPHSRETELKVHLKLVEEEANLLSRRIVELEVENRGLRAEMDDMKDHGGGGGPEARLAFSSLGGECGESLAELRRHLQFVEEEAELLRRSSAELEDQNKLLLNELAKYRSEHELDVTLSEDSCSVLSEPSQEELAAAKLQIGELSGKVKKLQYENRVLLSNLQRCDLASCQSTRPMLETDAEAGDSAQCVPAPLGETLEPHAARLCRAREAEALPGLREQAALVSKAIDVLVADANGFSVGLRLCLDNECADLRLHEAPDNSEGPRDAKLIHAILVRLSVLQQELNAFTRKADVALGSSGKEQPEPFPALPALGSQGPAKEIMLSKDLGSDFQPPDFRDLLEWEPRIREAFRTGDLESKPDPSRNFRPYRAEDNDSYASEIKDLQLVLAEAHDSLRGLQEQLSQERQLRKEEADSFNQKMVQLKEDQQRALLRREFELQSLSLQRRLEQKFWSQEKNILVQESQQFKHNFLLLFMKLRWFLKRWRQGKVLPSEEDDFLEVNSMKELYLLMEEEEMNAQHSDNKACTGESWTQNTPNECIKTLADMKVTLKELCWLLQDERRGLTELQQQFAKAKATWETERAELKGHASQMELKAGKGASERPGPDWKAALQREREEQQHLLAESYSAVMELTRQLQLSERHWSQEKLQLVERLQGEKQQVEQQVKELQNRLSQLQKAAEPWVLKHSDMEKQDNSWKEARSEKTHDKEGVSEAELGGTGLKRTKSVSSMSEFESLLDCSPYLAGGDARNKKLPNGPAFAFVSTEPVEPEKDAKEKAGLSTRDCSHIGSLACQEPAGRQMQRSYTAPDKTGIRVYYSPPVARRLGVPVVHDKEGKILIEPGFLFTTAKPKESAEADGLAESSYSRWLCNFSRQRLDGGSGASTSGSGPAFPALHDFEMSGNMSDDMKEITNCVRQAMRSGSLERKVKNTSSQTVGVATVGTQTIRTVSVGLQTDPPRSSLHSKSWSPRSSSLVSVRSKQISSSLDKVHSRIERPCCSPKYGSPKLQRRSVSKLDSTKDRSLWNLHQGKQNGSAWARSTTTRDSPVLRNINDGLSSLFSVVEHSGSTESVWKLGMSEARTKPEPPKYGIVQEFFRNVCGRAPSPTTAAGEESCKKPEPLSPASYHQPEGVSRILNKKAAKAGGSEEVRPTMLSQVGKDGILRDGDGSLILPSEDAVCDCSAQSLASCFIRPSRNTIRHSPSKCRLHPSESGWGGEERAAPQ</sequence>
<comment type="function">
    <text evidence="1 4 6">Microtubule-associated factor that enables integration of the centrosomal and Golgi-associated microtubules on the Golgi membrane, supporting directional migration. Preferentially acts on the perinuclear microtubules accumulated around the Golgi. Associates with the Golgi membrane through the N-terminal coiled-coil region and directly binds microtubules through the C-terminal domain (PubMed:35543016). Required for faithful chromosome segregation during mitosis (By similarity). Regulates autophagy by playing a role in the reduction of glucose production in an adiponectin- and insulin-dependent manner (PubMed:20813965).</text>
</comment>
<comment type="subunit">
    <text evidence="1 5 8">Interacts with CLASP2 (PubMed:28550165). Interacts with CLASP1 (By similarity). The C-terminal SOGA 25 kDa form occurs as a monomer (PubMed:20813965).</text>
</comment>
<comment type="subcellular location">
    <molecule>C-terminal 80 kDa form</molecule>
    <subcellularLocation>
        <location evidence="4">Secreted</location>
    </subcellularLocation>
    <text evidence="4">Secreted in primary hepatocyte-conditioned media.</text>
</comment>
<comment type="subcellular location">
    <subcellularLocation>
        <location evidence="5 6">Cytoplasm</location>
        <location evidence="5 6">Cytoskeleton</location>
    </subcellularLocation>
    <subcellularLocation>
        <location evidence="6">Golgi apparatus membrane</location>
    </subcellularLocation>
    <subcellularLocation>
        <location evidence="1">Midbody</location>
    </subcellularLocation>
    <text evidence="5">Co-localizes with CLASP2 in microtubules.</text>
</comment>
<comment type="alternative products">
    <event type="alternative splicing"/>
    <isoform>
        <id>E1U8D0-1</id>
        <name>1</name>
        <sequence type="displayed"/>
    </isoform>
    <isoform>
        <id>E1U8D0-2</id>
        <name>2</name>
        <sequence type="described" ref="VSP_062227"/>
    </isoform>
</comment>
<comment type="tissue specificity">
    <text evidence="4">Expressed in liver (at protein level).</text>
</comment>
<comment type="induction">
    <text evidence="4">Up-regulated by adiponectin in primary hepatocytes through the insulin signaling pathway. Down-regulated by amino-imidazole carboxamide riboside (AICAR), an AMPK activator that potentiated insulin secretion.</text>
</comment>
<comment type="domain">
    <text evidence="6">Associates with the Golgi membrane through the N-terminal coiled-coil region and directly binds microtubules through the C-terminal domain.</text>
</comment>
<comment type="PTM">
    <text evidence="1 4">Proteolytically cleaved into a C-terminal SOGA 25 kDa form that is detected in plasma (By similarity). Proteolytically cleaved in primary hepatocytes into a C-terminal SOGA 80 kDa form.</text>
</comment>
<comment type="PTM">
    <text evidence="1">Phosphorylated during mitosis in a CDK1-dependent manner.</text>
</comment>
<comment type="similarity">
    <text evidence="7">Belongs to the MTCL family.</text>
</comment>
<comment type="sequence caution" evidence="7">
    <conflict type="erroneous initiation">
        <sequence resource="EMBL-CDS" id="ADC34694"/>
    </conflict>
    <text>Extended N-terminus.</text>
</comment>
<comment type="sequence caution" evidence="7">
    <conflict type="erroneous initiation">
        <sequence resource="EMBL-CDS" id="DAA34787"/>
    </conflict>
    <text>Extended N-terminus.</text>
</comment>
<evidence type="ECO:0000250" key="1">
    <source>
        <dbReference type="UniProtKB" id="O94964"/>
    </source>
</evidence>
<evidence type="ECO:0000255" key="2"/>
<evidence type="ECO:0000256" key="3">
    <source>
        <dbReference type="SAM" id="MobiDB-lite"/>
    </source>
</evidence>
<evidence type="ECO:0000269" key="4">
    <source>
    </source>
</evidence>
<evidence type="ECO:0000269" key="5">
    <source>
    </source>
</evidence>
<evidence type="ECO:0000269" key="6">
    <source>
    </source>
</evidence>
<evidence type="ECO:0000305" key="7"/>
<evidence type="ECO:0000305" key="8">
    <source>
    </source>
</evidence>
<evidence type="ECO:0000312" key="9">
    <source>
        <dbReference type="Ensembl" id="ENSMUSP00000066556.7"/>
    </source>
</evidence>
<evidence type="ECO:0000312" key="10">
    <source>
        <dbReference type="Proteomes" id="UP000000589"/>
    </source>
</evidence>